<accession>A8AUR5</accession>
<gene>
    <name evidence="1" type="primary">rpsG</name>
    <name type="ordered locus">SGO_0205</name>
</gene>
<name>RS7_STRGC</name>
<reference key="1">
    <citation type="journal article" date="2007" name="J. Bacteriol.">
        <title>Genome-wide transcriptional changes in Streptococcus gordonii in response to competence signaling peptide.</title>
        <authorList>
            <person name="Vickerman M.M."/>
            <person name="Iobst S."/>
            <person name="Jesionowski A.M."/>
            <person name="Gill S.R."/>
        </authorList>
    </citation>
    <scope>NUCLEOTIDE SEQUENCE [LARGE SCALE GENOMIC DNA]</scope>
    <source>
        <strain>Challis / ATCC 35105 / BCRC 15272 / CH1 / DL1 / V288</strain>
    </source>
</reference>
<comment type="function">
    <text evidence="1">One of the primary rRNA binding proteins, it binds directly to 16S rRNA where it nucleates assembly of the head domain of the 30S subunit. Is located at the subunit interface close to the decoding center, probably blocks exit of the E-site tRNA.</text>
</comment>
<comment type="subunit">
    <text evidence="1">Part of the 30S ribosomal subunit. Contacts proteins S9 and S11.</text>
</comment>
<comment type="similarity">
    <text evidence="1">Belongs to the universal ribosomal protein uS7 family.</text>
</comment>
<feature type="chain" id="PRO_1000081310" description="Small ribosomal subunit protein uS7">
    <location>
        <begin position="1"/>
        <end position="156"/>
    </location>
</feature>
<protein>
    <recommendedName>
        <fullName evidence="1">Small ribosomal subunit protein uS7</fullName>
    </recommendedName>
    <alternativeName>
        <fullName evidence="2">30S ribosomal protein S7</fullName>
    </alternativeName>
</protein>
<keyword id="KW-1185">Reference proteome</keyword>
<keyword id="KW-0687">Ribonucleoprotein</keyword>
<keyword id="KW-0689">Ribosomal protein</keyword>
<keyword id="KW-0694">RNA-binding</keyword>
<keyword id="KW-0699">rRNA-binding</keyword>
<keyword id="KW-0820">tRNA-binding</keyword>
<organism>
    <name type="scientific">Streptococcus gordonii (strain Challis / ATCC 35105 / BCRC 15272 / CH1 / DL1 / V288)</name>
    <dbReference type="NCBI Taxonomy" id="467705"/>
    <lineage>
        <taxon>Bacteria</taxon>
        <taxon>Bacillati</taxon>
        <taxon>Bacillota</taxon>
        <taxon>Bacilli</taxon>
        <taxon>Lactobacillales</taxon>
        <taxon>Streptococcaceae</taxon>
        <taxon>Streptococcus</taxon>
    </lineage>
</organism>
<evidence type="ECO:0000255" key="1">
    <source>
        <dbReference type="HAMAP-Rule" id="MF_00480"/>
    </source>
</evidence>
<evidence type="ECO:0000305" key="2"/>
<sequence>MSRKNRAPKREVLPDPLYNSKLVTRLINRVMLDGKRGTATSIVYGAFEQIKEATGTDALEVFETAMENIMPVLEVRARRVGGSNYQVPVEVRPERRTTLGLRWLVTIARLRGEHTMQDRLAKEIMDAANNTGAAVKKREDTHRMAEANRAFAHFRW</sequence>
<dbReference type="EMBL" id="CP000725">
    <property type="protein sequence ID" value="ABV11099.1"/>
    <property type="molecule type" value="Genomic_DNA"/>
</dbReference>
<dbReference type="RefSeq" id="WP_011999743.1">
    <property type="nucleotide sequence ID" value="NC_009785.1"/>
</dbReference>
<dbReference type="SMR" id="A8AUR5"/>
<dbReference type="STRING" id="467705.SGO_0205"/>
<dbReference type="KEGG" id="sgo:SGO_0205"/>
<dbReference type="eggNOG" id="COG0049">
    <property type="taxonomic scope" value="Bacteria"/>
</dbReference>
<dbReference type="HOGENOM" id="CLU_072226_1_1_9"/>
<dbReference type="Proteomes" id="UP000001131">
    <property type="component" value="Chromosome"/>
</dbReference>
<dbReference type="GO" id="GO:0015935">
    <property type="term" value="C:small ribosomal subunit"/>
    <property type="evidence" value="ECO:0007669"/>
    <property type="project" value="InterPro"/>
</dbReference>
<dbReference type="GO" id="GO:0019843">
    <property type="term" value="F:rRNA binding"/>
    <property type="evidence" value="ECO:0007669"/>
    <property type="project" value="UniProtKB-UniRule"/>
</dbReference>
<dbReference type="GO" id="GO:0003735">
    <property type="term" value="F:structural constituent of ribosome"/>
    <property type="evidence" value="ECO:0007669"/>
    <property type="project" value="InterPro"/>
</dbReference>
<dbReference type="GO" id="GO:0000049">
    <property type="term" value="F:tRNA binding"/>
    <property type="evidence" value="ECO:0007669"/>
    <property type="project" value="UniProtKB-UniRule"/>
</dbReference>
<dbReference type="GO" id="GO:0006412">
    <property type="term" value="P:translation"/>
    <property type="evidence" value="ECO:0007669"/>
    <property type="project" value="UniProtKB-UniRule"/>
</dbReference>
<dbReference type="CDD" id="cd14869">
    <property type="entry name" value="uS7_Bacteria"/>
    <property type="match status" value="1"/>
</dbReference>
<dbReference type="FunFam" id="1.10.455.10:FF:000001">
    <property type="entry name" value="30S ribosomal protein S7"/>
    <property type="match status" value="1"/>
</dbReference>
<dbReference type="Gene3D" id="1.10.455.10">
    <property type="entry name" value="Ribosomal protein S7 domain"/>
    <property type="match status" value="1"/>
</dbReference>
<dbReference type="HAMAP" id="MF_00480_B">
    <property type="entry name" value="Ribosomal_uS7_B"/>
    <property type="match status" value="1"/>
</dbReference>
<dbReference type="InterPro" id="IPR000235">
    <property type="entry name" value="Ribosomal_uS7"/>
</dbReference>
<dbReference type="InterPro" id="IPR005717">
    <property type="entry name" value="Ribosomal_uS7_bac/org-type"/>
</dbReference>
<dbReference type="InterPro" id="IPR020606">
    <property type="entry name" value="Ribosomal_uS7_CS"/>
</dbReference>
<dbReference type="InterPro" id="IPR023798">
    <property type="entry name" value="Ribosomal_uS7_dom"/>
</dbReference>
<dbReference type="InterPro" id="IPR036823">
    <property type="entry name" value="Ribosomal_uS7_dom_sf"/>
</dbReference>
<dbReference type="NCBIfam" id="TIGR01029">
    <property type="entry name" value="rpsG_bact"/>
    <property type="match status" value="1"/>
</dbReference>
<dbReference type="PANTHER" id="PTHR11205">
    <property type="entry name" value="RIBOSOMAL PROTEIN S7"/>
    <property type="match status" value="1"/>
</dbReference>
<dbReference type="Pfam" id="PF00177">
    <property type="entry name" value="Ribosomal_S7"/>
    <property type="match status" value="1"/>
</dbReference>
<dbReference type="PIRSF" id="PIRSF002122">
    <property type="entry name" value="RPS7p_RPS7a_RPS5e_RPS7o"/>
    <property type="match status" value="1"/>
</dbReference>
<dbReference type="SUPFAM" id="SSF47973">
    <property type="entry name" value="Ribosomal protein S7"/>
    <property type="match status" value="1"/>
</dbReference>
<dbReference type="PROSITE" id="PS00052">
    <property type="entry name" value="RIBOSOMAL_S7"/>
    <property type="match status" value="1"/>
</dbReference>
<proteinExistence type="inferred from homology"/>